<reference key="1">
    <citation type="journal article" date="2010" name="J. Bacteriol.">
        <title>Complete genome sequence of the aerobic facultative methanotroph Methylocella silvestris BL2.</title>
        <authorList>
            <person name="Chen Y."/>
            <person name="Crombie A."/>
            <person name="Rahman M.T."/>
            <person name="Dedysh S.N."/>
            <person name="Liesack W."/>
            <person name="Stott M.B."/>
            <person name="Alam M."/>
            <person name="Theisen A.R."/>
            <person name="Murrell J.C."/>
            <person name="Dunfield P.F."/>
        </authorList>
    </citation>
    <scope>NUCLEOTIDE SEQUENCE [LARGE SCALE GENOMIC DNA]</scope>
    <source>
        <strain>DSM 15510 / CIP 108128 / LMG 27833 / NCIMB 13906 / BL2</strain>
    </source>
</reference>
<name>TYSY_METSB</name>
<proteinExistence type="inferred from homology"/>
<gene>
    <name evidence="1" type="primary">thyA</name>
    <name type="ordered locus">Msil_0600</name>
</gene>
<organism>
    <name type="scientific">Methylocella silvestris (strain DSM 15510 / CIP 108128 / LMG 27833 / NCIMB 13906 / BL2)</name>
    <dbReference type="NCBI Taxonomy" id="395965"/>
    <lineage>
        <taxon>Bacteria</taxon>
        <taxon>Pseudomonadati</taxon>
        <taxon>Pseudomonadota</taxon>
        <taxon>Alphaproteobacteria</taxon>
        <taxon>Hyphomicrobiales</taxon>
        <taxon>Beijerinckiaceae</taxon>
        <taxon>Methylocella</taxon>
    </lineage>
</organism>
<protein>
    <recommendedName>
        <fullName evidence="1">Thymidylate synthase</fullName>
        <shortName evidence="1">TS</shortName>
        <shortName evidence="1">TSase</shortName>
        <ecNumber evidence="1">2.1.1.45</ecNumber>
    </recommendedName>
</protein>
<dbReference type="EC" id="2.1.1.45" evidence="1"/>
<dbReference type="EMBL" id="CP001280">
    <property type="protein sequence ID" value="ACK49572.1"/>
    <property type="molecule type" value="Genomic_DNA"/>
</dbReference>
<dbReference type="RefSeq" id="WP_012589642.1">
    <property type="nucleotide sequence ID" value="NC_011666.1"/>
</dbReference>
<dbReference type="SMR" id="B8ELI3"/>
<dbReference type="STRING" id="395965.Msil_0600"/>
<dbReference type="KEGG" id="msl:Msil_0600"/>
<dbReference type="eggNOG" id="COG0207">
    <property type="taxonomic scope" value="Bacteria"/>
</dbReference>
<dbReference type="HOGENOM" id="CLU_021669_0_0_5"/>
<dbReference type="OrthoDB" id="9774633at2"/>
<dbReference type="UniPathway" id="UPA00575"/>
<dbReference type="Proteomes" id="UP000002257">
    <property type="component" value="Chromosome"/>
</dbReference>
<dbReference type="GO" id="GO:0005829">
    <property type="term" value="C:cytosol"/>
    <property type="evidence" value="ECO:0007669"/>
    <property type="project" value="TreeGrafter"/>
</dbReference>
<dbReference type="GO" id="GO:0004799">
    <property type="term" value="F:thymidylate synthase activity"/>
    <property type="evidence" value="ECO:0007669"/>
    <property type="project" value="UniProtKB-UniRule"/>
</dbReference>
<dbReference type="GO" id="GO:0006231">
    <property type="term" value="P:dTMP biosynthetic process"/>
    <property type="evidence" value="ECO:0007669"/>
    <property type="project" value="UniProtKB-UniRule"/>
</dbReference>
<dbReference type="GO" id="GO:0006235">
    <property type="term" value="P:dTTP biosynthetic process"/>
    <property type="evidence" value="ECO:0007669"/>
    <property type="project" value="UniProtKB-UniRule"/>
</dbReference>
<dbReference type="GO" id="GO:0032259">
    <property type="term" value="P:methylation"/>
    <property type="evidence" value="ECO:0007669"/>
    <property type="project" value="UniProtKB-KW"/>
</dbReference>
<dbReference type="CDD" id="cd00351">
    <property type="entry name" value="TS_Pyrimidine_HMase"/>
    <property type="match status" value="1"/>
</dbReference>
<dbReference type="FunFam" id="3.30.572.10:FF:000013">
    <property type="entry name" value="Thymidylate synthase"/>
    <property type="match status" value="1"/>
</dbReference>
<dbReference type="Gene3D" id="3.30.572.10">
    <property type="entry name" value="Thymidylate synthase/dCMP hydroxymethylase domain"/>
    <property type="match status" value="1"/>
</dbReference>
<dbReference type="HAMAP" id="MF_00008">
    <property type="entry name" value="Thymidy_synth_bact"/>
    <property type="match status" value="1"/>
</dbReference>
<dbReference type="InterPro" id="IPR045097">
    <property type="entry name" value="Thymidate_synth/dCMP_Mease"/>
</dbReference>
<dbReference type="InterPro" id="IPR023451">
    <property type="entry name" value="Thymidate_synth/dCMP_Mease_dom"/>
</dbReference>
<dbReference type="InterPro" id="IPR036926">
    <property type="entry name" value="Thymidate_synth/dCMP_Mease_sf"/>
</dbReference>
<dbReference type="InterPro" id="IPR000398">
    <property type="entry name" value="Thymidylate_synthase"/>
</dbReference>
<dbReference type="InterPro" id="IPR020940">
    <property type="entry name" value="Thymidylate_synthase_AS"/>
</dbReference>
<dbReference type="NCBIfam" id="NF002497">
    <property type="entry name" value="PRK01827.1-3"/>
    <property type="match status" value="1"/>
</dbReference>
<dbReference type="NCBIfam" id="NF002499">
    <property type="entry name" value="PRK01827.1-5"/>
    <property type="match status" value="1"/>
</dbReference>
<dbReference type="NCBIfam" id="TIGR03284">
    <property type="entry name" value="thym_sym"/>
    <property type="match status" value="2"/>
</dbReference>
<dbReference type="PANTHER" id="PTHR11548:SF9">
    <property type="entry name" value="THYMIDYLATE SYNTHASE"/>
    <property type="match status" value="1"/>
</dbReference>
<dbReference type="PANTHER" id="PTHR11548">
    <property type="entry name" value="THYMIDYLATE SYNTHASE 1"/>
    <property type="match status" value="1"/>
</dbReference>
<dbReference type="Pfam" id="PF00303">
    <property type="entry name" value="Thymidylat_synt"/>
    <property type="match status" value="1"/>
</dbReference>
<dbReference type="PRINTS" id="PR00108">
    <property type="entry name" value="THYMDSNTHASE"/>
</dbReference>
<dbReference type="SUPFAM" id="SSF55831">
    <property type="entry name" value="Thymidylate synthase/dCMP hydroxymethylase"/>
    <property type="match status" value="1"/>
</dbReference>
<dbReference type="PROSITE" id="PS00091">
    <property type="entry name" value="THYMIDYLATE_SYNTHASE"/>
    <property type="match status" value="1"/>
</dbReference>
<keyword id="KW-0963">Cytoplasm</keyword>
<keyword id="KW-0489">Methyltransferase</keyword>
<keyword id="KW-0545">Nucleotide biosynthesis</keyword>
<keyword id="KW-1185">Reference proteome</keyword>
<keyword id="KW-0808">Transferase</keyword>
<feature type="chain" id="PRO_1000197253" description="Thymidylate synthase">
    <location>
        <begin position="1"/>
        <end position="269"/>
    </location>
</feature>
<feature type="active site" description="Nucleophile" evidence="1">
    <location>
        <position position="146"/>
    </location>
</feature>
<feature type="binding site" description="in other chain" evidence="1">
    <location>
        <position position="21"/>
    </location>
    <ligand>
        <name>dUMP</name>
        <dbReference type="ChEBI" id="CHEBI:246422"/>
        <note>ligand shared between dimeric partners</note>
    </ligand>
</feature>
<feature type="binding site" evidence="1">
    <location>
        <position position="51"/>
    </location>
    <ligand>
        <name>(6R)-5,10-methylene-5,6,7,8-tetrahydrofolate</name>
        <dbReference type="ChEBI" id="CHEBI:15636"/>
    </ligand>
</feature>
<feature type="binding site" evidence="1">
    <location>
        <begin position="126"/>
        <end position="127"/>
    </location>
    <ligand>
        <name>dUMP</name>
        <dbReference type="ChEBI" id="CHEBI:246422"/>
        <note>ligand shared between dimeric partners</note>
    </ligand>
</feature>
<feature type="binding site" description="in other chain" evidence="1">
    <location>
        <begin position="171"/>
        <end position="174"/>
    </location>
    <ligand>
        <name>dUMP</name>
        <dbReference type="ChEBI" id="CHEBI:246422"/>
        <note>ligand shared between dimeric partners</note>
    </ligand>
</feature>
<feature type="binding site" evidence="1">
    <location>
        <position position="174"/>
    </location>
    <ligand>
        <name>(6R)-5,10-methylene-5,6,7,8-tetrahydrofolate</name>
        <dbReference type="ChEBI" id="CHEBI:15636"/>
    </ligand>
</feature>
<feature type="binding site" description="in other chain" evidence="1">
    <location>
        <position position="182"/>
    </location>
    <ligand>
        <name>dUMP</name>
        <dbReference type="ChEBI" id="CHEBI:246422"/>
        <note>ligand shared between dimeric partners</note>
    </ligand>
</feature>
<feature type="binding site" description="in other chain" evidence="1">
    <location>
        <begin position="212"/>
        <end position="214"/>
    </location>
    <ligand>
        <name>dUMP</name>
        <dbReference type="ChEBI" id="CHEBI:246422"/>
        <note>ligand shared between dimeric partners</note>
    </ligand>
</feature>
<feature type="binding site" evidence="1">
    <location>
        <position position="268"/>
    </location>
    <ligand>
        <name>(6R)-5,10-methylene-5,6,7,8-tetrahydrofolate</name>
        <dbReference type="ChEBI" id="CHEBI:15636"/>
    </ligand>
</feature>
<sequence length="269" mass="30407">MQAYLDLIDKILREGVRKPDRTGTGTLSIFGYQMRFDLGAGFPLVTTKKLHWKSIVHELIWFLRGDTNIGYLKDNGVGIWDEWADDSGDLGPVYGRQWRSWQAPDGRTIDQIANVIDEIQRDPFSRRLLVSAWNPADLPAMALAPCHCLFQFNVRDDSTGTRRLDLQLYQRSGDAFLGAPFNIASYALLTELVASVCGLTPGDFVHTFGDAHLYLNHIDQAKLQLSRDPRPLPRLRINGNVKSLFDIRFEDLSLENYDPHPVIKAPVAV</sequence>
<evidence type="ECO:0000255" key="1">
    <source>
        <dbReference type="HAMAP-Rule" id="MF_00008"/>
    </source>
</evidence>
<accession>B8ELI3</accession>
<comment type="function">
    <text evidence="1">Catalyzes the reductive methylation of 2'-deoxyuridine-5'-monophosphate (dUMP) to 2'-deoxythymidine-5'-monophosphate (dTMP) while utilizing 5,10-methylenetetrahydrofolate (mTHF) as the methyl donor and reductant in the reaction, yielding dihydrofolate (DHF) as a by-product. This enzymatic reaction provides an intracellular de novo source of dTMP, an essential precursor for DNA biosynthesis.</text>
</comment>
<comment type="catalytic activity">
    <reaction evidence="1">
        <text>dUMP + (6R)-5,10-methylene-5,6,7,8-tetrahydrofolate = 7,8-dihydrofolate + dTMP</text>
        <dbReference type="Rhea" id="RHEA:12104"/>
        <dbReference type="ChEBI" id="CHEBI:15636"/>
        <dbReference type="ChEBI" id="CHEBI:57451"/>
        <dbReference type="ChEBI" id="CHEBI:63528"/>
        <dbReference type="ChEBI" id="CHEBI:246422"/>
        <dbReference type="EC" id="2.1.1.45"/>
    </reaction>
</comment>
<comment type="pathway">
    <text evidence="1">Pyrimidine metabolism; dTTP biosynthesis.</text>
</comment>
<comment type="subunit">
    <text evidence="1">Homodimer.</text>
</comment>
<comment type="subcellular location">
    <subcellularLocation>
        <location evidence="1">Cytoplasm</location>
    </subcellularLocation>
</comment>
<comment type="similarity">
    <text evidence="1">Belongs to the thymidylate synthase family. Bacterial-type ThyA subfamily.</text>
</comment>